<keyword id="KW-0963">Cytoplasm</keyword>
<keyword id="KW-0690">Ribosome biogenesis</keyword>
<accession>B8JFY3</accession>
<reference key="1">
    <citation type="submission" date="2009-01" db="EMBL/GenBank/DDBJ databases">
        <title>Complete sequence of Anaeromyxobacter dehalogenans 2CP-1.</title>
        <authorList>
            <person name="Lucas S."/>
            <person name="Copeland A."/>
            <person name="Lapidus A."/>
            <person name="Glavina del Rio T."/>
            <person name="Dalin E."/>
            <person name="Tice H."/>
            <person name="Bruce D."/>
            <person name="Goodwin L."/>
            <person name="Pitluck S."/>
            <person name="Saunders E."/>
            <person name="Brettin T."/>
            <person name="Detter J.C."/>
            <person name="Han C."/>
            <person name="Larimer F."/>
            <person name="Land M."/>
            <person name="Hauser L."/>
            <person name="Kyrpides N."/>
            <person name="Ovchinnikova G."/>
            <person name="Beliaev A.S."/>
            <person name="Richardson P."/>
        </authorList>
    </citation>
    <scope>NUCLEOTIDE SEQUENCE [LARGE SCALE GENOMIC DNA]</scope>
    <source>
        <strain>2CP-1 / ATCC BAA-258</strain>
    </source>
</reference>
<evidence type="ECO:0000255" key="1">
    <source>
        <dbReference type="HAMAP-Rule" id="MF_01077"/>
    </source>
</evidence>
<name>RIMP_ANAD2</name>
<protein>
    <recommendedName>
        <fullName evidence="1">Ribosome maturation factor RimP</fullName>
    </recommendedName>
</protein>
<feature type="chain" id="PRO_0000384599" description="Ribosome maturation factor RimP">
    <location>
        <begin position="1"/>
        <end position="171"/>
    </location>
</feature>
<organism>
    <name type="scientific">Anaeromyxobacter dehalogenans (strain 2CP-1 / ATCC BAA-258)</name>
    <dbReference type="NCBI Taxonomy" id="455488"/>
    <lineage>
        <taxon>Bacteria</taxon>
        <taxon>Pseudomonadati</taxon>
        <taxon>Myxococcota</taxon>
        <taxon>Myxococcia</taxon>
        <taxon>Myxococcales</taxon>
        <taxon>Cystobacterineae</taxon>
        <taxon>Anaeromyxobacteraceae</taxon>
        <taxon>Anaeromyxobacter</taxon>
    </lineage>
</organism>
<gene>
    <name evidence="1" type="primary">rimP</name>
    <name type="ordered locus">A2cp1_1227</name>
</gene>
<proteinExistence type="inferred from homology"/>
<dbReference type="EMBL" id="CP001359">
    <property type="protein sequence ID" value="ACL64571.1"/>
    <property type="molecule type" value="Genomic_DNA"/>
</dbReference>
<dbReference type="RefSeq" id="WP_012632554.1">
    <property type="nucleotide sequence ID" value="NC_011891.1"/>
</dbReference>
<dbReference type="SMR" id="B8JFY3"/>
<dbReference type="KEGG" id="acp:A2cp1_1227"/>
<dbReference type="HOGENOM" id="CLU_070525_2_2_7"/>
<dbReference type="Proteomes" id="UP000007089">
    <property type="component" value="Chromosome"/>
</dbReference>
<dbReference type="GO" id="GO:0005829">
    <property type="term" value="C:cytosol"/>
    <property type="evidence" value="ECO:0007669"/>
    <property type="project" value="TreeGrafter"/>
</dbReference>
<dbReference type="GO" id="GO:0000028">
    <property type="term" value="P:ribosomal small subunit assembly"/>
    <property type="evidence" value="ECO:0007669"/>
    <property type="project" value="TreeGrafter"/>
</dbReference>
<dbReference type="GO" id="GO:0006412">
    <property type="term" value="P:translation"/>
    <property type="evidence" value="ECO:0007669"/>
    <property type="project" value="TreeGrafter"/>
</dbReference>
<dbReference type="CDD" id="cd01734">
    <property type="entry name" value="YlxS_C"/>
    <property type="match status" value="1"/>
</dbReference>
<dbReference type="FunFam" id="3.30.300.70:FF:000001">
    <property type="entry name" value="Ribosome maturation factor RimP"/>
    <property type="match status" value="1"/>
</dbReference>
<dbReference type="Gene3D" id="2.30.30.180">
    <property type="entry name" value="Ribosome maturation factor RimP, C-terminal domain"/>
    <property type="match status" value="1"/>
</dbReference>
<dbReference type="Gene3D" id="3.30.300.70">
    <property type="entry name" value="RimP-like superfamily, N-terminal"/>
    <property type="match status" value="1"/>
</dbReference>
<dbReference type="HAMAP" id="MF_01077">
    <property type="entry name" value="RimP"/>
    <property type="match status" value="1"/>
</dbReference>
<dbReference type="InterPro" id="IPR003728">
    <property type="entry name" value="Ribosome_maturation_RimP"/>
</dbReference>
<dbReference type="InterPro" id="IPR028998">
    <property type="entry name" value="RimP_C"/>
</dbReference>
<dbReference type="InterPro" id="IPR036847">
    <property type="entry name" value="RimP_C_sf"/>
</dbReference>
<dbReference type="InterPro" id="IPR028989">
    <property type="entry name" value="RimP_N"/>
</dbReference>
<dbReference type="InterPro" id="IPR035956">
    <property type="entry name" value="RimP_N_sf"/>
</dbReference>
<dbReference type="PANTHER" id="PTHR33867">
    <property type="entry name" value="RIBOSOME MATURATION FACTOR RIMP"/>
    <property type="match status" value="1"/>
</dbReference>
<dbReference type="PANTHER" id="PTHR33867:SF1">
    <property type="entry name" value="RIBOSOME MATURATION FACTOR RIMP"/>
    <property type="match status" value="1"/>
</dbReference>
<dbReference type="Pfam" id="PF17384">
    <property type="entry name" value="DUF150_C"/>
    <property type="match status" value="1"/>
</dbReference>
<dbReference type="Pfam" id="PF02576">
    <property type="entry name" value="RimP_N"/>
    <property type="match status" value="1"/>
</dbReference>
<dbReference type="SUPFAM" id="SSF74942">
    <property type="entry name" value="YhbC-like, C-terminal domain"/>
    <property type="match status" value="1"/>
</dbReference>
<dbReference type="SUPFAM" id="SSF75420">
    <property type="entry name" value="YhbC-like, N-terminal domain"/>
    <property type="match status" value="1"/>
</dbReference>
<comment type="function">
    <text evidence="1">Required for maturation of 30S ribosomal subunits.</text>
</comment>
<comment type="subcellular location">
    <subcellularLocation>
        <location evidence="1">Cytoplasm</location>
    </subcellularLocation>
</comment>
<comment type="similarity">
    <text evidence="1">Belongs to the RimP family.</text>
</comment>
<sequence>MTGIGEQSIAEQVRRLLEPVLERDGYELVEVEWARLAGRWTLRVFIDKAGGVGIDDCQAVSKTVEPILDVADVIEPAYDLEVSSPGLDRPLRKPGDFDRYAGQRVHVKAYGPVAGTAPGAPARKHWTGVLKGFRDGAVELDVDGVLHRVPHDQIAKANLEYDVEGDLRRKD</sequence>